<dbReference type="EC" id="3.4.21.88" evidence="1"/>
<dbReference type="EMBL" id="BA000037">
    <property type="protein sequence ID" value="BAC92887.1"/>
    <property type="molecule type" value="Genomic_DNA"/>
</dbReference>
<dbReference type="RefSeq" id="WP_011079176.1">
    <property type="nucleotide sequence ID" value="NC_005139.1"/>
</dbReference>
<dbReference type="SMR" id="Q7MQ85"/>
<dbReference type="STRING" id="672.VV93_v1c01110"/>
<dbReference type="MEROPS" id="S24.001"/>
<dbReference type="GeneID" id="93895440"/>
<dbReference type="KEGG" id="vvy:VV0123"/>
<dbReference type="eggNOG" id="COG1974">
    <property type="taxonomic scope" value="Bacteria"/>
</dbReference>
<dbReference type="HOGENOM" id="CLU_066192_45_3_6"/>
<dbReference type="Proteomes" id="UP000002675">
    <property type="component" value="Chromosome I"/>
</dbReference>
<dbReference type="GO" id="GO:0003677">
    <property type="term" value="F:DNA binding"/>
    <property type="evidence" value="ECO:0007669"/>
    <property type="project" value="UniProtKB-UniRule"/>
</dbReference>
<dbReference type="GO" id="GO:0004252">
    <property type="term" value="F:serine-type endopeptidase activity"/>
    <property type="evidence" value="ECO:0007669"/>
    <property type="project" value="UniProtKB-UniRule"/>
</dbReference>
<dbReference type="GO" id="GO:0006281">
    <property type="term" value="P:DNA repair"/>
    <property type="evidence" value="ECO:0007669"/>
    <property type="project" value="UniProtKB-UniRule"/>
</dbReference>
<dbReference type="GO" id="GO:0006260">
    <property type="term" value="P:DNA replication"/>
    <property type="evidence" value="ECO:0007669"/>
    <property type="project" value="UniProtKB-UniRule"/>
</dbReference>
<dbReference type="GO" id="GO:0045892">
    <property type="term" value="P:negative regulation of DNA-templated transcription"/>
    <property type="evidence" value="ECO:0007669"/>
    <property type="project" value="UniProtKB-UniRule"/>
</dbReference>
<dbReference type="GO" id="GO:0006508">
    <property type="term" value="P:proteolysis"/>
    <property type="evidence" value="ECO:0007669"/>
    <property type="project" value="InterPro"/>
</dbReference>
<dbReference type="GO" id="GO:0009432">
    <property type="term" value="P:SOS response"/>
    <property type="evidence" value="ECO:0007669"/>
    <property type="project" value="UniProtKB-UniRule"/>
</dbReference>
<dbReference type="CDD" id="cd06529">
    <property type="entry name" value="S24_LexA-like"/>
    <property type="match status" value="1"/>
</dbReference>
<dbReference type="FunFam" id="1.10.10.10:FF:000009">
    <property type="entry name" value="LexA repressor"/>
    <property type="match status" value="1"/>
</dbReference>
<dbReference type="FunFam" id="2.10.109.10:FF:000001">
    <property type="entry name" value="LexA repressor"/>
    <property type="match status" value="1"/>
</dbReference>
<dbReference type="Gene3D" id="2.10.109.10">
    <property type="entry name" value="Umud Fragment, subunit A"/>
    <property type="match status" value="1"/>
</dbReference>
<dbReference type="Gene3D" id="1.10.10.10">
    <property type="entry name" value="Winged helix-like DNA-binding domain superfamily/Winged helix DNA-binding domain"/>
    <property type="match status" value="1"/>
</dbReference>
<dbReference type="HAMAP" id="MF_00015">
    <property type="entry name" value="LexA"/>
    <property type="match status" value="1"/>
</dbReference>
<dbReference type="InterPro" id="IPR006200">
    <property type="entry name" value="LexA"/>
</dbReference>
<dbReference type="InterPro" id="IPR039418">
    <property type="entry name" value="LexA-like"/>
</dbReference>
<dbReference type="InterPro" id="IPR036286">
    <property type="entry name" value="LexA/Signal_pep-like_sf"/>
</dbReference>
<dbReference type="InterPro" id="IPR006199">
    <property type="entry name" value="LexA_DNA-bd_dom"/>
</dbReference>
<dbReference type="InterPro" id="IPR050077">
    <property type="entry name" value="LexA_repressor"/>
</dbReference>
<dbReference type="InterPro" id="IPR006197">
    <property type="entry name" value="Peptidase_S24_LexA"/>
</dbReference>
<dbReference type="InterPro" id="IPR015927">
    <property type="entry name" value="Peptidase_S24_S26A/B/C"/>
</dbReference>
<dbReference type="InterPro" id="IPR036388">
    <property type="entry name" value="WH-like_DNA-bd_sf"/>
</dbReference>
<dbReference type="InterPro" id="IPR036390">
    <property type="entry name" value="WH_DNA-bd_sf"/>
</dbReference>
<dbReference type="NCBIfam" id="TIGR00498">
    <property type="entry name" value="lexA"/>
    <property type="match status" value="1"/>
</dbReference>
<dbReference type="PANTHER" id="PTHR33516">
    <property type="entry name" value="LEXA REPRESSOR"/>
    <property type="match status" value="1"/>
</dbReference>
<dbReference type="PANTHER" id="PTHR33516:SF2">
    <property type="entry name" value="LEXA REPRESSOR-RELATED"/>
    <property type="match status" value="1"/>
</dbReference>
<dbReference type="Pfam" id="PF01726">
    <property type="entry name" value="LexA_DNA_bind"/>
    <property type="match status" value="1"/>
</dbReference>
<dbReference type="Pfam" id="PF00717">
    <property type="entry name" value="Peptidase_S24"/>
    <property type="match status" value="1"/>
</dbReference>
<dbReference type="PRINTS" id="PR00726">
    <property type="entry name" value="LEXASERPTASE"/>
</dbReference>
<dbReference type="SUPFAM" id="SSF51306">
    <property type="entry name" value="LexA/Signal peptidase"/>
    <property type="match status" value="1"/>
</dbReference>
<dbReference type="SUPFAM" id="SSF46785">
    <property type="entry name" value="Winged helix' DNA-binding domain"/>
    <property type="match status" value="1"/>
</dbReference>
<accession>Q7MQ85</accession>
<keyword id="KW-0068">Autocatalytic cleavage</keyword>
<keyword id="KW-0227">DNA damage</keyword>
<keyword id="KW-0234">DNA repair</keyword>
<keyword id="KW-0235">DNA replication</keyword>
<keyword id="KW-0238">DNA-binding</keyword>
<keyword id="KW-0378">Hydrolase</keyword>
<keyword id="KW-0678">Repressor</keyword>
<keyword id="KW-0742">SOS response</keyword>
<keyword id="KW-0804">Transcription</keyword>
<keyword id="KW-0805">Transcription regulation</keyword>
<sequence>MKPLTPRQQQVFDLIKSKIEVTGMPPTRAEIARELGFRSANAAEEHLKALARKQVIEIVPGASRGIRILLEEEAANDEPGLPLIGRVAAGEPILAQEHVEMHYQVDPSMFRPQADFLLRVHGESMKDIGIMDGDLLAVHKTQDVRNGQVVVARVEDDVTVKRLERKGSTVLLHAENEEFAPIEVDLTSQQLTIEGIAVGIIRNTDWM</sequence>
<protein>
    <recommendedName>
        <fullName evidence="1">LexA repressor</fullName>
        <ecNumber evidence="1">3.4.21.88</ecNumber>
    </recommendedName>
</protein>
<evidence type="ECO:0000255" key="1">
    <source>
        <dbReference type="HAMAP-Rule" id="MF_00015"/>
    </source>
</evidence>
<name>LEXA_VIBVY</name>
<reference key="1">
    <citation type="journal article" date="2003" name="Genome Res.">
        <title>Comparative genome analysis of Vibrio vulnificus, a marine pathogen.</title>
        <authorList>
            <person name="Chen C.-Y."/>
            <person name="Wu K.-M."/>
            <person name="Chang Y.-C."/>
            <person name="Chang C.-H."/>
            <person name="Tsai H.-C."/>
            <person name="Liao T.-L."/>
            <person name="Liu Y.-M."/>
            <person name="Chen H.-J."/>
            <person name="Shen A.B.-T."/>
            <person name="Li J.-C."/>
            <person name="Su T.-L."/>
            <person name="Shao C.-P."/>
            <person name="Lee C.-T."/>
            <person name="Hor L.-I."/>
            <person name="Tsai S.-F."/>
        </authorList>
    </citation>
    <scope>NUCLEOTIDE SEQUENCE [LARGE SCALE GENOMIC DNA]</scope>
    <source>
        <strain>YJ016</strain>
    </source>
</reference>
<organism>
    <name type="scientific">Vibrio vulnificus (strain YJ016)</name>
    <dbReference type="NCBI Taxonomy" id="196600"/>
    <lineage>
        <taxon>Bacteria</taxon>
        <taxon>Pseudomonadati</taxon>
        <taxon>Pseudomonadota</taxon>
        <taxon>Gammaproteobacteria</taxon>
        <taxon>Vibrionales</taxon>
        <taxon>Vibrionaceae</taxon>
        <taxon>Vibrio</taxon>
    </lineage>
</organism>
<feature type="chain" id="PRO_0000170104" description="LexA repressor">
    <location>
        <begin position="1"/>
        <end position="207"/>
    </location>
</feature>
<feature type="DNA-binding region" description="H-T-H motif" evidence="1">
    <location>
        <begin position="28"/>
        <end position="48"/>
    </location>
</feature>
<feature type="active site" description="For autocatalytic cleavage activity" evidence="1">
    <location>
        <position position="124"/>
    </location>
</feature>
<feature type="active site" description="For autocatalytic cleavage activity" evidence="1">
    <location>
        <position position="161"/>
    </location>
</feature>
<feature type="site" description="Cleavage; by autolysis" evidence="1">
    <location>
        <begin position="89"/>
        <end position="90"/>
    </location>
</feature>
<proteinExistence type="inferred from homology"/>
<gene>
    <name evidence="1" type="primary">lexA</name>
    <name type="ordered locus">VV0123</name>
</gene>
<comment type="function">
    <text evidence="1">Represses a number of genes involved in the response to DNA damage (SOS response), including recA and lexA. In the presence of single-stranded DNA, RecA interacts with LexA causing an autocatalytic cleavage which disrupts the DNA-binding part of LexA, leading to derepression of the SOS regulon and eventually DNA repair.</text>
</comment>
<comment type="catalytic activity">
    <reaction evidence="1">
        <text>Hydrolysis of Ala-|-Gly bond in repressor LexA.</text>
        <dbReference type="EC" id="3.4.21.88"/>
    </reaction>
</comment>
<comment type="subunit">
    <text evidence="1">Homodimer.</text>
</comment>
<comment type="similarity">
    <text evidence="1">Belongs to the peptidase S24 family.</text>
</comment>